<gene>
    <name evidence="1" type="primary">dnaK</name>
    <name type="ordered locus">HH_0663</name>
</gene>
<dbReference type="EMBL" id="AE017125">
    <property type="protein sequence ID" value="AAP77260.1"/>
    <property type="molecule type" value="Genomic_DNA"/>
</dbReference>
<dbReference type="RefSeq" id="WP_011115505.1">
    <property type="nucleotide sequence ID" value="NC_004917.1"/>
</dbReference>
<dbReference type="SMR" id="Q7VIE3"/>
<dbReference type="STRING" id="235279.HH_0663"/>
<dbReference type="KEGG" id="hhe:HH_0663"/>
<dbReference type="eggNOG" id="COG0443">
    <property type="taxonomic scope" value="Bacteria"/>
</dbReference>
<dbReference type="HOGENOM" id="CLU_005965_2_1_7"/>
<dbReference type="Proteomes" id="UP000002495">
    <property type="component" value="Chromosome"/>
</dbReference>
<dbReference type="GO" id="GO:0005524">
    <property type="term" value="F:ATP binding"/>
    <property type="evidence" value="ECO:0007669"/>
    <property type="project" value="UniProtKB-UniRule"/>
</dbReference>
<dbReference type="GO" id="GO:0140662">
    <property type="term" value="F:ATP-dependent protein folding chaperone"/>
    <property type="evidence" value="ECO:0007669"/>
    <property type="project" value="InterPro"/>
</dbReference>
<dbReference type="GO" id="GO:0051082">
    <property type="term" value="F:unfolded protein binding"/>
    <property type="evidence" value="ECO:0007669"/>
    <property type="project" value="InterPro"/>
</dbReference>
<dbReference type="CDD" id="cd10234">
    <property type="entry name" value="ASKHA_NBD_HSP70_DnaK-like"/>
    <property type="match status" value="1"/>
</dbReference>
<dbReference type="FunFam" id="2.60.34.10:FF:000014">
    <property type="entry name" value="Chaperone protein DnaK HSP70"/>
    <property type="match status" value="1"/>
</dbReference>
<dbReference type="FunFam" id="1.20.1270.10:FF:000001">
    <property type="entry name" value="Molecular chaperone DnaK"/>
    <property type="match status" value="1"/>
</dbReference>
<dbReference type="FunFam" id="3.30.420.40:FF:000004">
    <property type="entry name" value="Molecular chaperone DnaK"/>
    <property type="match status" value="1"/>
</dbReference>
<dbReference type="FunFam" id="3.90.640.10:FF:000003">
    <property type="entry name" value="Molecular chaperone DnaK"/>
    <property type="match status" value="1"/>
</dbReference>
<dbReference type="Gene3D" id="1.20.1270.10">
    <property type="match status" value="1"/>
</dbReference>
<dbReference type="Gene3D" id="3.30.420.40">
    <property type="match status" value="2"/>
</dbReference>
<dbReference type="Gene3D" id="3.90.640.10">
    <property type="entry name" value="Actin, Chain A, domain 4"/>
    <property type="match status" value="1"/>
</dbReference>
<dbReference type="Gene3D" id="2.60.34.10">
    <property type="entry name" value="Substrate Binding Domain Of DNAk, Chain A, domain 1"/>
    <property type="match status" value="1"/>
</dbReference>
<dbReference type="HAMAP" id="MF_00332">
    <property type="entry name" value="DnaK"/>
    <property type="match status" value="1"/>
</dbReference>
<dbReference type="InterPro" id="IPR043129">
    <property type="entry name" value="ATPase_NBD"/>
</dbReference>
<dbReference type="InterPro" id="IPR012725">
    <property type="entry name" value="Chaperone_DnaK"/>
</dbReference>
<dbReference type="InterPro" id="IPR018181">
    <property type="entry name" value="Heat_shock_70_CS"/>
</dbReference>
<dbReference type="InterPro" id="IPR029048">
    <property type="entry name" value="HSP70_C_sf"/>
</dbReference>
<dbReference type="InterPro" id="IPR029047">
    <property type="entry name" value="HSP70_peptide-bd_sf"/>
</dbReference>
<dbReference type="InterPro" id="IPR013126">
    <property type="entry name" value="Hsp_70_fam"/>
</dbReference>
<dbReference type="NCBIfam" id="NF001413">
    <property type="entry name" value="PRK00290.1"/>
    <property type="match status" value="1"/>
</dbReference>
<dbReference type="NCBIfam" id="NF003520">
    <property type="entry name" value="PRK05183.1"/>
    <property type="match status" value="1"/>
</dbReference>
<dbReference type="NCBIfam" id="TIGR02350">
    <property type="entry name" value="prok_dnaK"/>
    <property type="match status" value="1"/>
</dbReference>
<dbReference type="PANTHER" id="PTHR19375">
    <property type="entry name" value="HEAT SHOCK PROTEIN 70KDA"/>
    <property type="match status" value="1"/>
</dbReference>
<dbReference type="Pfam" id="PF00012">
    <property type="entry name" value="HSP70"/>
    <property type="match status" value="1"/>
</dbReference>
<dbReference type="PRINTS" id="PR00301">
    <property type="entry name" value="HEATSHOCK70"/>
</dbReference>
<dbReference type="SUPFAM" id="SSF53067">
    <property type="entry name" value="Actin-like ATPase domain"/>
    <property type="match status" value="2"/>
</dbReference>
<dbReference type="SUPFAM" id="SSF100934">
    <property type="entry name" value="Heat shock protein 70kD (HSP70), C-terminal subdomain"/>
    <property type="match status" value="1"/>
</dbReference>
<dbReference type="SUPFAM" id="SSF100920">
    <property type="entry name" value="Heat shock protein 70kD (HSP70), peptide-binding domain"/>
    <property type="match status" value="1"/>
</dbReference>
<dbReference type="PROSITE" id="PS00297">
    <property type="entry name" value="HSP70_1"/>
    <property type="match status" value="1"/>
</dbReference>
<dbReference type="PROSITE" id="PS00329">
    <property type="entry name" value="HSP70_2"/>
    <property type="match status" value="1"/>
</dbReference>
<dbReference type="PROSITE" id="PS01036">
    <property type="entry name" value="HSP70_3"/>
    <property type="match status" value="1"/>
</dbReference>
<reference key="1">
    <citation type="journal article" date="2003" name="Proc. Natl. Acad. Sci. U.S.A.">
        <title>The complete genome sequence of the carcinogenic bacterium Helicobacter hepaticus.</title>
        <authorList>
            <person name="Suerbaum S."/>
            <person name="Josenhans C."/>
            <person name="Sterzenbach T."/>
            <person name="Drescher B."/>
            <person name="Brandt P."/>
            <person name="Bell M."/>
            <person name="Droege M."/>
            <person name="Fartmann B."/>
            <person name="Fischer H.-P."/>
            <person name="Ge Z."/>
            <person name="Hoerster A."/>
            <person name="Holland R."/>
            <person name="Klein K."/>
            <person name="Koenig J."/>
            <person name="Macko L."/>
            <person name="Mendz G.L."/>
            <person name="Nyakatura G."/>
            <person name="Schauer D.B."/>
            <person name="Shen Z."/>
            <person name="Weber J."/>
            <person name="Frosch M."/>
            <person name="Fox J.G."/>
        </authorList>
    </citation>
    <scope>NUCLEOTIDE SEQUENCE [LARGE SCALE GENOMIC DNA]</scope>
    <source>
        <strain>ATCC 51449 / 3B1</strain>
    </source>
</reference>
<keyword id="KW-0067">ATP-binding</keyword>
<keyword id="KW-0143">Chaperone</keyword>
<keyword id="KW-0547">Nucleotide-binding</keyword>
<keyword id="KW-0597">Phosphoprotein</keyword>
<keyword id="KW-1185">Reference proteome</keyword>
<keyword id="KW-0346">Stress response</keyword>
<comment type="function">
    <text evidence="1">Acts as a chaperone.</text>
</comment>
<comment type="induction">
    <text evidence="1">By stress conditions e.g. heat shock.</text>
</comment>
<comment type="similarity">
    <text evidence="1">Belongs to the heat shock protein 70 family.</text>
</comment>
<organism>
    <name type="scientific">Helicobacter hepaticus (strain ATCC 51449 / 3B1)</name>
    <dbReference type="NCBI Taxonomy" id="235279"/>
    <lineage>
        <taxon>Bacteria</taxon>
        <taxon>Pseudomonadati</taxon>
        <taxon>Campylobacterota</taxon>
        <taxon>Epsilonproteobacteria</taxon>
        <taxon>Campylobacterales</taxon>
        <taxon>Helicobacteraceae</taxon>
        <taxon>Helicobacter</taxon>
    </lineage>
</organism>
<name>DNAK_HELHP</name>
<sequence>MAKVIGIDLGTTNSAMAVYEGNEAKIIANKEGKNTTPSIVAFTDKGEILVGEPAKRQAVTNPKKTVYSIKRIMGLMFNEDKAKEAEKRLPYNIVDRNGACAVEIADKIYTPQEISAKILMKLKEDAQSYLGEDVTEAVITVPAYFNDSQRKATKEAGTIAGLNVLRIINEPTSAALAYGLDKKEAEKIMVYDLGGGTFDVTVLETGDNVVEVLATGGDAFLGGDDFDNRIIDWAAEEFKSDEGIDLKNDVMALQRLKDAAENAKKELSSAQETEINLPFITADASGPKHLVKKITRAKFESLIDDLIEDTIKKIEFVIKDAGLSQSDISEVVMVGGSTRIPKVQERVKAFISKDLNKSVNPDEVVAVGAAIQGGVLKGDVKDVLLLDVTPLSLGIETAGGISTKVVERGVTIPTKKTQIFSTYEDNQPAVSINVLQGERELARDNKSLGRFDLSGIPAAPRGVPQIEVTFDIDANGILTVSAKDKATGKSQEIKISGSSGLSDAEIEKMVKEAELHKEEDTKKKAIIELRNNADSLVYQTKKSLEEFKDKIESAEVEKIQSAVAALEETLKNENASKEELEEKIKNLTEVSHKLAEAAYAKEQGGTQQGTDTKKKDDDVIDAEVE</sequence>
<protein>
    <recommendedName>
        <fullName evidence="1">Chaperone protein DnaK</fullName>
    </recommendedName>
    <alternativeName>
        <fullName evidence="1">HSP70</fullName>
    </alternativeName>
    <alternativeName>
        <fullName evidence="1">Heat shock 70 kDa protein</fullName>
    </alternativeName>
    <alternativeName>
        <fullName evidence="1">Heat shock protein 70</fullName>
    </alternativeName>
</protein>
<feature type="chain" id="PRO_0000078469" description="Chaperone protein DnaK">
    <location>
        <begin position="1"/>
        <end position="625"/>
    </location>
</feature>
<feature type="region of interest" description="Disordered" evidence="2">
    <location>
        <begin position="598"/>
        <end position="625"/>
    </location>
</feature>
<feature type="modified residue" description="Phosphothreonine; by autocatalysis" evidence="1">
    <location>
        <position position="197"/>
    </location>
</feature>
<accession>Q7VIE3</accession>
<evidence type="ECO:0000255" key="1">
    <source>
        <dbReference type="HAMAP-Rule" id="MF_00332"/>
    </source>
</evidence>
<evidence type="ECO:0000256" key="2">
    <source>
        <dbReference type="SAM" id="MobiDB-lite"/>
    </source>
</evidence>
<proteinExistence type="inferred from homology"/>